<evidence type="ECO:0000250" key="1"/>
<evidence type="ECO:0000250" key="2">
    <source>
        <dbReference type="UniProtKB" id="Q04660"/>
    </source>
</evidence>
<evidence type="ECO:0000255" key="3">
    <source>
        <dbReference type="HAMAP-Rule" id="MF_03027"/>
    </source>
</evidence>
<evidence type="ECO:0000256" key="4">
    <source>
        <dbReference type="SAM" id="MobiDB-lite"/>
    </source>
</evidence>
<comment type="function">
    <text evidence="3">Component of the NOP7 complex, which is required for maturation of the 25S and 5.8S ribosomal RNAs and formation of the 60S ribosome.</text>
</comment>
<comment type="subunit">
    <text evidence="3">Component of the NOP7 complex, composed of ERB1, NOP7 and YTM1. The complex is held together by ERB1, which interacts with NOP7 via its N-terminal domain and with YTM1 via a high-affinity interaction between the seven-bladed beta-propeller domains of the 2 proteins. The NOP7 complex associates with the 66S pre-ribosome.</text>
</comment>
<comment type="subcellular location">
    <subcellularLocation>
        <location evidence="3">Nucleus</location>
        <location evidence="3">Nucleolus</location>
    </subcellularLocation>
    <subcellularLocation>
        <location evidence="3">Nucleus</location>
        <location evidence="3">Nucleoplasm</location>
    </subcellularLocation>
</comment>
<comment type="similarity">
    <text evidence="3">Belongs to the WD repeat BOP1/ERB1 family.</text>
</comment>
<proteinExistence type="inferred from homology"/>
<reference key="1">
    <citation type="journal article" date="2007" name="Proc. Natl. Acad. Sci. U.S.A.">
        <title>Genome sequencing and comparative analysis of Saccharomyces cerevisiae strain YJM789.</title>
        <authorList>
            <person name="Wei W."/>
            <person name="McCusker J.H."/>
            <person name="Hyman R.W."/>
            <person name="Jones T."/>
            <person name="Ning Y."/>
            <person name="Cao Z."/>
            <person name="Gu Z."/>
            <person name="Bruno D."/>
            <person name="Miranda M."/>
            <person name="Nguyen M."/>
            <person name="Wilhelmy J."/>
            <person name="Komp C."/>
            <person name="Tamse R."/>
            <person name="Wang X."/>
            <person name="Jia P."/>
            <person name="Luedi P."/>
            <person name="Oefner P.J."/>
            <person name="David L."/>
            <person name="Dietrich F.S."/>
            <person name="Li Y."/>
            <person name="Davis R.W."/>
            <person name="Steinmetz L.M."/>
        </authorList>
    </citation>
    <scope>NUCLEOTIDE SEQUENCE [LARGE SCALE GENOMIC DNA]</scope>
    <source>
        <strain>YJM789</strain>
    </source>
</reference>
<organism>
    <name type="scientific">Saccharomyces cerevisiae (strain YJM789)</name>
    <name type="common">Baker's yeast</name>
    <dbReference type="NCBI Taxonomy" id="307796"/>
    <lineage>
        <taxon>Eukaryota</taxon>
        <taxon>Fungi</taxon>
        <taxon>Dikarya</taxon>
        <taxon>Ascomycota</taxon>
        <taxon>Saccharomycotina</taxon>
        <taxon>Saccharomycetes</taxon>
        <taxon>Saccharomycetales</taxon>
        <taxon>Saccharomycetaceae</taxon>
        <taxon>Saccharomyces</taxon>
    </lineage>
</organism>
<accession>A6ZMA9</accession>
<dbReference type="EMBL" id="AAFW02000020">
    <property type="protein sequence ID" value="EDN64439.1"/>
    <property type="molecule type" value="Genomic_DNA"/>
</dbReference>
<dbReference type="SMR" id="A6ZMA9"/>
<dbReference type="IntAct" id="A6ZMA9">
    <property type="interactions" value="2"/>
</dbReference>
<dbReference type="MINT" id="A6ZMA9"/>
<dbReference type="HOGENOM" id="CLU_011390_0_1_1"/>
<dbReference type="Proteomes" id="UP000007060">
    <property type="component" value="Unassembled WGS sequence"/>
</dbReference>
<dbReference type="GO" id="GO:0005654">
    <property type="term" value="C:nucleoplasm"/>
    <property type="evidence" value="ECO:0007669"/>
    <property type="project" value="UniProtKB-SubCell"/>
</dbReference>
<dbReference type="GO" id="GO:0070545">
    <property type="term" value="C:PeBoW complex"/>
    <property type="evidence" value="ECO:0007669"/>
    <property type="project" value="TreeGrafter"/>
</dbReference>
<dbReference type="GO" id="GO:0030687">
    <property type="term" value="C:preribosome, large subunit precursor"/>
    <property type="evidence" value="ECO:0007669"/>
    <property type="project" value="UniProtKB-UniRule"/>
</dbReference>
<dbReference type="GO" id="GO:0043021">
    <property type="term" value="F:ribonucleoprotein complex binding"/>
    <property type="evidence" value="ECO:0007669"/>
    <property type="project" value="UniProtKB-UniRule"/>
</dbReference>
<dbReference type="GO" id="GO:0000466">
    <property type="term" value="P:maturation of 5.8S rRNA from tricistronic rRNA transcript (SSU-rRNA, 5.8S rRNA, LSU-rRNA)"/>
    <property type="evidence" value="ECO:0007669"/>
    <property type="project" value="UniProtKB-UniRule"/>
</dbReference>
<dbReference type="GO" id="GO:0000463">
    <property type="term" value="P:maturation of LSU-rRNA from tricistronic rRNA transcript (SSU-rRNA, 5.8S rRNA, LSU-rRNA)"/>
    <property type="evidence" value="ECO:0007669"/>
    <property type="project" value="UniProtKB-UniRule"/>
</dbReference>
<dbReference type="FunFam" id="2.130.10.10:FF:000061">
    <property type="entry name" value="Ribosome biogenesis protein BOP1 homolog"/>
    <property type="match status" value="1"/>
</dbReference>
<dbReference type="Gene3D" id="2.130.10.10">
    <property type="entry name" value="YVTN repeat-like/Quinoprotein amine dehydrogenase"/>
    <property type="match status" value="1"/>
</dbReference>
<dbReference type="HAMAP" id="MF_03027">
    <property type="entry name" value="BOP1"/>
    <property type="match status" value="1"/>
</dbReference>
<dbReference type="InterPro" id="IPR028598">
    <property type="entry name" value="BOP1/Erb1"/>
</dbReference>
<dbReference type="InterPro" id="IPR012953">
    <property type="entry name" value="BOP1_N_dom"/>
</dbReference>
<dbReference type="InterPro" id="IPR015943">
    <property type="entry name" value="WD40/YVTN_repeat-like_dom_sf"/>
</dbReference>
<dbReference type="InterPro" id="IPR019775">
    <property type="entry name" value="WD40_repeat_CS"/>
</dbReference>
<dbReference type="InterPro" id="IPR036322">
    <property type="entry name" value="WD40_repeat_dom_sf"/>
</dbReference>
<dbReference type="InterPro" id="IPR001680">
    <property type="entry name" value="WD40_rpt"/>
</dbReference>
<dbReference type="PANTHER" id="PTHR17605:SF0">
    <property type="entry name" value="RIBOSOME BIOGENESIS PROTEIN BOP1"/>
    <property type="match status" value="1"/>
</dbReference>
<dbReference type="PANTHER" id="PTHR17605">
    <property type="entry name" value="RIBOSOME BIOGENESIS PROTEIN BOP1 BLOCK OF PROLIFERATION 1 PROTEIN"/>
    <property type="match status" value="1"/>
</dbReference>
<dbReference type="Pfam" id="PF08145">
    <property type="entry name" value="BOP1NT"/>
    <property type="match status" value="1"/>
</dbReference>
<dbReference type="Pfam" id="PF00400">
    <property type="entry name" value="WD40"/>
    <property type="match status" value="3"/>
</dbReference>
<dbReference type="SMART" id="SM01035">
    <property type="entry name" value="BOP1NT"/>
    <property type="match status" value="1"/>
</dbReference>
<dbReference type="SMART" id="SM00320">
    <property type="entry name" value="WD40"/>
    <property type="match status" value="5"/>
</dbReference>
<dbReference type="SUPFAM" id="SSF50978">
    <property type="entry name" value="WD40 repeat-like"/>
    <property type="match status" value="1"/>
</dbReference>
<dbReference type="PROSITE" id="PS00678">
    <property type="entry name" value="WD_REPEATS_1"/>
    <property type="match status" value="1"/>
</dbReference>
<dbReference type="PROSITE" id="PS50082">
    <property type="entry name" value="WD_REPEATS_2"/>
    <property type="match status" value="2"/>
</dbReference>
<dbReference type="PROSITE" id="PS50294">
    <property type="entry name" value="WD_REPEATS_REGION"/>
    <property type="match status" value="2"/>
</dbReference>
<sequence length="807" mass="91703">MMAKNNKTTEAKMSKKRAASEESDVEEDEDKLLSVDGLIDAEASESDEDDDEYESAVEEKESSSDKEAQDDSDDDSDAELNKLLAEEEGDEEEDYDSSEFSDDTTSLTDRLSGVKLQTIVDPNIYSKYADGSDRIIKPEINPVYDSDDSDAETQNTIGNIPLSAYDEMPHIGYDINGKRIMRPAKGSALDQLLDSIELPEGWTGLLDKNSGSSLNLTKEELELISKIQRNEQTDDSINPYEPLIDWFTRHEEVMPLTAVPEPKRRFVPSKNEAKRVMKIVRAIREGRIIPPKKLKEMKEKEKTENYQYDLWGDSTETNDHVMHLRAPKLPPPTNEESYNPPEEYLLSPEEKEAWENTEYSERERNFVPQKYSALRKVPGYGESIRERFERSLDLYLAPRVRKNKLNIDPNSLIPELPSPKDLRPFPIRCSTIYAGHKGKVRTLSIDPSGLWLATGSDDGTVRVWEILTGREVYRTTLIDDEENPDDHIECIEWNPDANNGILAVAVGENIHLIVPPIFGYDIENNGKTKIEDGFGYDTFGTVKKSNLEVNENGDGDEDGENESAKNAVKKQVAQWNKPSQKQLEKDICITISCKKTVKKLSWHRKGDYFVTVQPDSGNTSVLIHQVSKHLTQSPFKKSKGIIMDAKFHPFKPQLFVCSQRYVRIYDLSQQILVKKLLPGARWLSKIDIHPRGDNLIASSFDKRVLWHDLDLASTPYKTLRYHEKAVRSVNFHKKLPLFSSAADDGTIHVFHATVYDDMMKNPMIVPLKKLTGHKVINSLGVLDAIWHPREAWLFSAGADNTARLWTT</sequence>
<protein>
    <recommendedName>
        <fullName evidence="3">Ribosome biogenesis protein ERB1</fullName>
    </recommendedName>
    <alternativeName>
        <fullName evidence="3">Eukaryotic ribosome biogenesis protein 1</fullName>
    </alternativeName>
</protein>
<feature type="chain" id="PRO_0000370444" description="Ribosome biogenesis protein ERB1">
    <location>
        <begin position="1"/>
        <end position="807"/>
    </location>
</feature>
<feature type="repeat" description="WD 1">
    <location>
        <begin position="435"/>
        <end position="474"/>
    </location>
</feature>
<feature type="repeat" description="WD 2">
    <location>
        <begin position="483"/>
        <end position="523"/>
    </location>
</feature>
<feature type="repeat" description="WD 3">
    <location>
        <begin position="592"/>
        <end position="634"/>
    </location>
</feature>
<feature type="repeat" description="WD 4">
    <location>
        <begin position="637"/>
        <end position="675"/>
    </location>
</feature>
<feature type="repeat" description="WD 5">
    <location>
        <begin position="678"/>
        <end position="717"/>
    </location>
</feature>
<feature type="repeat" description="WD 6">
    <location>
        <begin position="721"/>
        <end position="760"/>
    </location>
</feature>
<feature type="repeat" description="WD 7">
    <location>
        <begin position="776"/>
        <end position="807"/>
    </location>
</feature>
<feature type="region of interest" description="Disordered" evidence="4">
    <location>
        <begin position="1"/>
        <end position="112"/>
    </location>
</feature>
<feature type="region of interest" description="Required for interaction with NOP7" evidence="1">
    <location>
        <begin position="265"/>
        <end position="383"/>
    </location>
</feature>
<feature type="region of interest" description="Required for interaction with YTM1" evidence="1">
    <location>
        <begin position="383"/>
        <end position="419"/>
    </location>
</feature>
<feature type="compositionally biased region" description="Acidic residues" evidence="4">
    <location>
        <begin position="21"/>
        <end position="30"/>
    </location>
</feature>
<feature type="compositionally biased region" description="Acidic residues" evidence="4">
    <location>
        <begin position="42"/>
        <end position="56"/>
    </location>
</feature>
<feature type="compositionally biased region" description="Basic and acidic residues" evidence="4">
    <location>
        <begin position="57"/>
        <end position="69"/>
    </location>
</feature>
<feature type="compositionally biased region" description="Acidic residues" evidence="4">
    <location>
        <begin position="86"/>
        <end position="102"/>
    </location>
</feature>
<feature type="modified residue" description="Phosphoserine" evidence="2">
    <location>
        <position position="23"/>
    </location>
</feature>
<feature type="modified residue" description="Phosphoserine" evidence="2">
    <location>
        <position position="72"/>
    </location>
</feature>
<feature type="modified residue" description="Phosphoserine" evidence="2">
    <location>
        <position position="76"/>
    </location>
</feature>
<feature type="modified residue" description="Phosphoserine" evidence="2">
    <location>
        <position position="146"/>
    </location>
</feature>
<feature type="modified residue" description="Phosphoserine" evidence="2">
    <location>
        <position position="149"/>
    </location>
</feature>
<feature type="modified residue" description="Phosphoserine" evidence="2">
    <location>
        <position position="418"/>
    </location>
</feature>
<feature type="cross-link" description="Glycyl lysine isopeptide (Lys-Gly) (interchain with G-Cter in ubiquitin)" evidence="2">
    <location>
        <position position="127"/>
    </location>
</feature>
<gene>
    <name evidence="3" type="primary">ERB1</name>
    <name type="ORF">SCY_4221</name>
</gene>
<keyword id="KW-1017">Isopeptide bond</keyword>
<keyword id="KW-0539">Nucleus</keyword>
<keyword id="KW-0597">Phosphoprotein</keyword>
<keyword id="KW-0677">Repeat</keyword>
<keyword id="KW-0690">Ribosome biogenesis</keyword>
<keyword id="KW-0698">rRNA processing</keyword>
<keyword id="KW-0832">Ubl conjugation</keyword>
<keyword id="KW-0853">WD repeat</keyword>
<name>ERB1_YEAS7</name>